<sequence length="309" mass="31788">MEGAGAARKRSRPDTANGGAAGGKRSRETESFQTGLSSKLKPCTKFFSTIGCPFGEGCHFSHFVPGGYQAVAKTLNLGNPAVPAPARAPMDHAAGGNSHPASSGKTRMCTKYNTAEGCKFGDKCHFAHGERELGKPAYMSHESAMAPPMGGRYGGRPEPPPPAAMGPPAGNFGASATAKISVDASLAGGIIGKGGVNTKQICRVTGVKLSIRDHESDSNLKNIELEGNFDQIKQASNMVGELIATISPSTPAKKPAGSAAGAAPAGRGGPGGRSNYKTKLCENFVKGTCTFGDRCHFAHGENEQRKGAA</sequence>
<reference key="1">
    <citation type="journal article" date="2002" name="Nature">
        <title>Sequence and analysis of rice chromosome 4.</title>
        <authorList>
            <person name="Feng Q."/>
            <person name="Zhang Y."/>
            <person name="Hao P."/>
            <person name="Wang S."/>
            <person name="Fu G."/>
            <person name="Huang Y."/>
            <person name="Li Y."/>
            <person name="Zhu J."/>
            <person name="Liu Y."/>
            <person name="Hu X."/>
            <person name="Jia P."/>
            <person name="Zhang Y."/>
            <person name="Zhao Q."/>
            <person name="Ying K."/>
            <person name="Yu S."/>
            <person name="Tang Y."/>
            <person name="Weng Q."/>
            <person name="Zhang L."/>
            <person name="Lu Y."/>
            <person name="Mu J."/>
            <person name="Lu Y."/>
            <person name="Zhang L.S."/>
            <person name="Yu Z."/>
            <person name="Fan D."/>
            <person name="Liu X."/>
            <person name="Lu T."/>
            <person name="Li C."/>
            <person name="Wu Y."/>
            <person name="Sun T."/>
            <person name="Lei H."/>
            <person name="Li T."/>
            <person name="Hu H."/>
            <person name="Guan J."/>
            <person name="Wu M."/>
            <person name="Zhang R."/>
            <person name="Zhou B."/>
            <person name="Chen Z."/>
            <person name="Chen L."/>
            <person name="Jin Z."/>
            <person name="Wang R."/>
            <person name="Yin H."/>
            <person name="Cai Z."/>
            <person name="Ren S."/>
            <person name="Lv G."/>
            <person name="Gu W."/>
            <person name="Zhu G."/>
            <person name="Tu Y."/>
            <person name="Jia J."/>
            <person name="Zhang Y."/>
            <person name="Chen J."/>
            <person name="Kang H."/>
            <person name="Chen X."/>
            <person name="Shao C."/>
            <person name="Sun Y."/>
            <person name="Hu Q."/>
            <person name="Zhang X."/>
            <person name="Zhang W."/>
            <person name="Wang L."/>
            <person name="Ding C."/>
            <person name="Sheng H."/>
            <person name="Gu J."/>
            <person name="Chen S."/>
            <person name="Ni L."/>
            <person name="Zhu F."/>
            <person name="Chen W."/>
            <person name="Lan L."/>
            <person name="Lai Y."/>
            <person name="Cheng Z."/>
            <person name="Gu M."/>
            <person name="Jiang J."/>
            <person name="Li J."/>
            <person name="Hong G."/>
            <person name="Xue Y."/>
            <person name="Han B."/>
        </authorList>
    </citation>
    <scope>NUCLEOTIDE SEQUENCE [LARGE SCALE GENOMIC DNA]</scope>
    <source>
        <strain>cv. Nipponbare</strain>
    </source>
</reference>
<reference key="2">
    <citation type="journal article" date="2005" name="Nature">
        <title>The map-based sequence of the rice genome.</title>
        <authorList>
            <consortium name="International rice genome sequencing project (IRGSP)"/>
        </authorList>
    </citation>
    <scope>NUCLEOTIDE SEQUENCE [LARGE SCALE GENOMIC DNA]</scope>
    <source>
        <strain>cv. Nipponbare</strain>
    </source>
</reference>
<reference key="3">
    <citation type="journal article" date="2008" name="Nucleic Acids Res.">
        <title>The rice annotation project database (RAP-DB): 2008 update.</title>
        <authorList>
            <consortium name="The rice annotation project (RAP)"/>
        </authorList>
    </citation>
    <scope>GENOME REANNOTATION</scope>
    <source>
        <strain>cv. Nipponbare</strain>
    </source>
</reference>
<reference key="4">
    <citation type="journal article" date="2013" name="Rice">
        <title>Improvement of the Oryza sativa Nipponbare reference genome using next generation sequence and optical map data.</title>
        <authorList>
            <person name="Kawahara Y."/>
            <person name="de la Bastide M."/>
            <person name="Hamilton J.P."/>
            <person name="Kanamori H."/>
            <person name="McCombie W.R."/>
            <person name="Ouyang S."/>
            <person name="Schwartz D.C."/>
            <person name="Tanaka T."/>
            <person name="Wu J."/>
            <person name="Zhou S."/>
            <person name="Childs K.L."/>
            <person name="Davidson R.M."/>
            <person name="Lin H."/>
            <person name="Quesada-Ocampo L."/>
            <person name="Vaillancourt B."/>
            <person name="Sakai H."/>
            <person name="Lee S.S."/>
            <person name="Kim J."/>
            <person name="Numa H."/>
            <person name="Itoh T."/>
            <person name="Buell C.R."/>
            <person name="Matsumoto T."/>
        </authorList>
    </citation>
    <scope>GENOME REANNOTATION</scope>
    <source>
        <strain>cv. Nipponbare</strain>
    </source>
</reference>
<reference key="5">
    <citation type="journal article" date="2005" name="PLoS Biol.">
        <title>The genomes of Oryza sativa: a history of duplications.</title>
        <authorList>
            <person name="Yu J."/>
            <person name="Wang J."/>
            <person name="Lin W."/>
            <person name="Li S."/>
            <person name="Li H."/>
            <person name="Zhou J."/>
            <person name="Ni P."/>
            <person name="Dong W."/>
            <person name="Hu S."/>
            <person name="Zeng C."/>
            <person name="Zhang J."/>
            <person name="Zhang Y."/>
            <person name="Li R."/>
            <person name="Xu Z."/>
            <person name="Li S."/>
            <person name="Li X."/>
            <person name="Zheng H."/>
            <person name="Cong L."/>
            <person name="Lin L."/>
            <person name="Yin J."/>
            <person name="Geng J."/>
            <person name="Li G."/>
            <person name="Shi J."/>
            <person name="Liu J."/>
            <person name="Lv H."/>
            <person name="Li J."/>
            <person name="Wang J."/>
            <person name="Deng Y."/>
            <person name="Ran L."/>
            <person name="Shi X."/>
            <person name="Wang X."/>
            <person name="Wu Q."/>
            <person name="Li C."/>
            <person name="Ren X."/>
            <person name="Wang J."/>
            <person name="Wang X."/>
            <person name="Li D."/>
            <person name="Liu D."/>
            <person name="Zhang X."/>
            <person name="Ji Z."/>
            <person name="Zhao W."/>
            <person name="Sun Y."/>
            <person name="Zhang Z."/>
            <person name="Bao J."/>
            <person name="Han Y."/>
            <person name="Dong L."/>
            <person name="Ji J."/>
            <person name="Chen P."/>
            <person name="Wu S."/>
            <person name="Liu J."/>
            <person name="Xiao Y."/>
            <person name="Bu D."/>
            <person name="Tan J."/>
            <person name="Yang L."/>
            <person name="Ye C."/>
            <person name="Zhang J."/>
            <person name="Xu J."/>
            <person name="Zhou Y."/>
            <person name="Yu Y."/>
            <person name="Zhang B."/>
            <person name="Zhuang S."/>
            <person name="Wei H."/>
            <person name="Liu B."/>
            <person name="Lei M."/>
            <person name="Yu H."/>
            <person name="Li Y."/>
            <person name="Xu H."/>
            <person name="Wei S."/>
            <person name="He X."/>
            <person name="Fang L."/>
            <person name="Zhang Z."/>
            <person name="Zhang Y."/>
            <person name="Huang X."/>
            <person name="Su Z."/>
            <person name="Tong W."/>
            <person name="Li J."/>
            <person name="Tong Z."/>
            <person name="Li S."/>
            <person name="Ye J."/>
            <person name="Wang L."/>
            <person name="Fang L."/>
            <person name="Lei T."/>
            <person name="Chen C.-S."/>
            <person name="Chen H.-C."/>
            <person name="Xu Z."/>
            <person name="Li H."/>
            <person name="Huang H."/>
            <person name="Zhang F."/>
            <person name="Xu H."/>
            <person name="Li N."/>
            <person name="Zhao C."/>
            <person name="Li S."/>
            <person name="Dong L."/>
            <person name="Huang Y."/>
            <person name="Li L."/>
            <person name="Xi Y."/>
            <person name="Qi Q."/>
            <person name="Li W."/>
            <person name="Zhang B."/>
            <person name="Hu W."/>
            <person name="Zhang Y."/>
            <person name="Tian X."/>
            <person name="Jiao Y."/>
            <person name="Liang X."/>
            <person name="Jin J."/>
            <person name="Gao L."/>
            <person name="Zheng W."/>
            <person name="Hao B."/>
            <person name="Liu S.-M."/>
            <person name="Wang W."/>
            <person name="Yuan L."/>
            <person name="Cao M."/>
            <person name="McDermott J."/>
            <person name="Samudrala R."/>
            <person name="Wang J."/>
            <person name="Wong G.K.-S."/>
            <person name="Yang H."/>
        </authorList>
    </citation>
    <scope>NUCLEOTIDE SEQUENCE [LARGE SCALE GENOMIC DNA]</scope>
    <source>
        <strain>cv. Nipponbare</strain>
    </source>
</reference>
<reference key="6">
    <citation type="journal article" date="2003" name="Science">
        <title>Collection, mapping, and annotation of over 28,000 cDNA clones from japonica rice.</title>
        <authorList>
            <consortium name="The rice full-length cDNA consortium"/>
        </authorList>
    </citation>
    <scope>NUCLEOTIDE SEQUENCE [LARGE SCALE MRNA]</scope>
    <source>
        <strain>cv. Nipponbare</strain>
    </source>
</reference>
<reference key="7">
    <citation type="journal article" date="2008" name="BMC Genomics">
        <title>Genome-wide analysis of CCCH zinc finger family in Arabidopsis and rice.</title>
        <authorList>
            <person name="Wang D."/>
            <person name="Guo Y."/>
            <person name="Wu C."/>
            <person name="Yang G."/>
            <person name="Li Y."/>
            <person name="Zheng C."/>
        </authorList>
    </citation>
    <scope>NOMENCLATURE</scope>
</reference>
<gene>
    <name type="ordered locus">Os04g0665700</name>
    <name type="ordered locus">LOC_Os04g57010</name>
    <name evidence="4" type="ORF">OsJ_16534</name>
    <name type="ORF">OSJNBa0087O24.9</name>
</gene>
<protein>
    <recommendedName>
        <fullName>Zinc finger CCCH domain-containing protein 31</fullName>
        <shortName>OsC3H31</shortName>
    </recommendedName>
</protein>
<name>C3H31_ORYSJ</name>
<accession>Q7XPK1</accession>
<accession>B7F7Y2</accession>
<feature type="chain" id="PRO_0000346826" description="Zinc finger CCCH domain-containing protein 31">
    <location>
        <begin position="1"/>
        <end position="309"/>
    </location>
</feature>
<feature type="domain" description="KH" evidence="1">
    <location>
        <begin position="175"/>
        <end position="239"/>
    </location>
</feature>
<feature type="zinc finger region" description="C3H1-type 1" evidence="2">
    <location>
        <begin position="37"/>
        <end position="65"/>
    </location>
</feature>
<feature type="zinc finger region" description="C3H1-type 2" evidence="2">
    <location>
        <begin position="103"/>
        <end position="131"/>
    </location>
</feature>
<feature type="zinc finger region" description="C3H1-type 3" evidence="2">
    <location>
        <begin position="275"/>
        <end position="302"/>
    </location>
</feature>
<feature type="region of interest" description="Disordered" evidence="3">
    <location>
        <begin position="1"/>
        <end position="36"/>
    </location>
</feature>
<feature type="region of interest" description="Disordered" evidence="3">
    <location>
        <begin position="86"/>
        <end position="106"/>
    </location>
</feature>
<feature type="region of interest" description="Disordered" evidence="3">
    <location>
        <begin position="249"/>
        <end position="273"/>
    </location>
</feature>
<feature type="compositionally biased region" description="Low complexity" evidence="3">
    <location>
        <begin position="251"/>
        <end position="265"/>
    </location>
</feature>
<dbReference type="EMBL" id="AL606646">
    <property type="protein sequence ID" value="CAE03586.1"/>
    <property type="molecule type" value="Genomic_DNA"/>
</dbReference>
<dbReference type="EMBL" id="AP008210">
    <property type="protein sequence ID" value="BAF16093.1"/>
    <property type="molecule type" value="Genomic_DNA"/>
</dbReference>
<dbReference type="EMBL" id="AP014960">
    <property type="protein sequence ID" value="BAS91505.1"/>
    <property type="molecule type" value="Genomic_DNA"/>
</dbReference>
<dbReference type="EMBL" id="CM000141">
    <property type="protein sequence ID" value="EEE61859.1"/>
    <property type="molecule type" value="Genomic_DNA"/>
</dbReference>
<dbReference type="EMBL" id="AK121951">
    <property type="protein sequence ID" value="BAH00730.1"/>
    <property type="molecule type" value="mRNA"/>
</dbReference>
<dbReference type="RefSeq" id="XP_015636567.1">
    <property type="nucleotide sequence ID" value="XM_015781081.1"/>
</dbReference>
<dbReference type="SMR" id="Q7XPK1"/>
<dbReference type="FunCoup" id="Q7XPK1">
    <property type="interactions" value="1887"/>
</dbReference>
<dbReference type="STRING" id="39947.Q7XPK1"/>
<dbReference type="PaxDb" id="39947-Q7XPK1"/>
<dbReference type="EnsemblPlants" id="Os04t0665700-01">
    <property type="protein sequence ID" value="Os04t0665700-01"/>
    <property type="gene ID" value="Os04g0665700"/>
</dbReference>
<dbReference type="Gramene" id="Os04t0665700-01">
    <property type="protein sequence ID" value="Os04t0665700-01"/>
    <property type="gene ID" value="Os04g0665700"/>
</dbReference>
<dbReference type="KEGG" id="dosa:Os04g0665700"/>
<dbReference type="eggNOG" id="KOG1677">
    <property type="taxonomic scope" value="Eukaryota"/>
</dbReference>
<dbReference type="HOGENOM" id="CLU_045191_0_0_1"/>
<dbReference type="InParanoid" id="Q7XPK1"/>
<dbReference type="OMA" id="KYNTPEG"/>
<dbReference type="OrthoDB" id="410307at2759"/>
<dbReference type="Proteomes" id="UP000000763">
    <property type="component" value="Chromosome 4"/>
</dbReference>
<dbReference type="Proteomes" id="UP000007752">
    <property type="component" value="Chromosome 4"/>
</dbReference>
<dbReference type="Proteomes" id="UP000059680">
    <property type="component" value="Chromosome 4"/>
</dbReference>
<dbReference type="GO" id="GO:0005737">
    <property type="term" value="C:cytoplasm"/>
    <property type="evidence" value="ECO:0000318"/>
    <property type="project" value="GO_Central"/>
</dbReference>
<dbReference type="GO" id="GO:0003677">
    <property type="term" value="F:DNA binding"/>
    <property type="evidence" value="ECO:0007669"/>
    <property type="project" value="UniProtKB-KW"/>
</dbReference>
<dbReference type="GO" id="GO:0003729">
    <property type="term" value="F:mRNA binding"/>
    <property type="evidence" value="ECO:0000318"/>
    <property type="project" value="GO_Central"/>
</dbReference>
<dbReference type="GO" id="GO:0008270">
    <property type="term" value="F:zinc ion binding"/>
    <property type="evidence" value="ECO:0007669"/>
    <property type="project" value="UniProtKB-KW"/>
</dbReference>
<dbReference type="GO" id="GO:0010468">
    <property type="term" value="P:regulation of gene expression"/>
    <property type="evidence" value="ECO:0000318"/>
    <property type="project" value="GO_Central"/>
</dbReference>
<dbReference type="CDD" id="cd22464">
    <property type="entry name" value="KH-I_AtC3H36_like"/>
    <property type="match status" value="1"/>
</dbReference>
<dbReference type="FunFam" id="4.10.1000.10:FF:000003">
    <property type="entry name" value="Zinc finger CCCH domain-containing protein"/>
    <property type="match status" value="2"/>
</dbReference>
<dbReference type="FunFam" id="3.30.1370.10:FF:000069">
    <property type="entry name" value="Zinc finger CCCH domain-containing protein 52"/>
    <property type="match status" value="1"/>
</dbReference>
<dbReference type="Gene3D" id="3.30.1370.10">
    <property type="entry name" value="K Homology domain, type 1"/>
    <property type="match status" value="1"/>
</dbReference>
<dbReference type="Gene3D" id="4.10.1000.10">
    <property type="entry name" value="Zinc finger, CCCH-type"/>
    <property type="match status" value="2"/>
</dbReference>
<dbReference type="InterPro" id="IPR004087">
    <property type="entry name" value="KH_dom"/>
</dbReference>
<dbReference type="InterPro" id="IPR004088">
    <property type="entry name" value="KH_dom_type_1"/>
</dbReference>
<dbReference type="InterPro" id="IPR036612">
    <property type="entry name" value="KH_dom_type_1_sf"/>
</dbReference>
<dbReference type="InterPro" id="IPR045877">
    <property type="entry name" value="ZFP36-like"/>
</dbReference>
<dbReference type="InterPro" id="IPR000571">
    <property type="entry name" value="Znf_CCCH"/>
</dbReference>
<dbReference type="InterPro" id="IPR036855">
    <property type="entry name" value="Znf_CCCH_sf"/>
</dbReference>
<dbReference type="PANTHER" id="PTHR12547">
    <property type="entry name" value="CCCH ZINC FINGER/TIS11-RELATED"/>
    <property type="match status" value="1"/>
</dbReference>
<dbReference type="PANTHER" id="PTHR12547:SF154">
    <property type="entry name" value="ZINC FINGER CCCH DOMAIN-CONTAINING PROTEIN 52"/>
    <property type="match status" value="1"/>
</dbReference>
<dbReference type="Pfam" id="PF00013">
    <property type="entry name" value="KH_1"/>
    <property type="match status" value="1"/>
</dbReference>
<dbReference type="Pfam" id="PF00642">
    <property type="entry name" value="zf-CCCH"/>
    <property type="match status" value="2"/>
</dbReference>
<dbReference type="Pfam" id="PF14608">
    <property type="entry name" value="zf-CCCH_2"/>
    <property type="match status" value="1"/>
</dbReference>
<dbReference type="SMART" id="SM00322">
    <property type="entry name" value="KH"/>
    <property type="match status" value="1"/>
</dbReference>
<dbReference type="SMART" id="SM00356">
    <property type="entry name" value="ZnF_C3H1"/>
    <property type="match status" value="3"/>
</dbReference>
<dbReference type="SUPFAM" id="SSF90229">
    <property type="entry name" value="CCCH zinc finger"/>
    <property type="match status" value="3"/>
</dbReference>
<dbReference type="SUPFAM" id="SSF54791">
    <property type="entry name" value="Eukaryotic type KH-domain (KH-domain type I)"/>
    <property type="match status" value="1"/>
</dbReference>
<dbReference type="PROSITE" id="PS50084">
    <property type="entry name" value="KH_TYPE_1"/>
    <property type="match status" value="1"/>
</dbReference>
<dbReference type="PROSITE" id="PS50103">
    <property type="entry name" value="ZF_C3H1"/>
    <property type="match status" value="3"/>
</dbReference>
<organism>
    <name type="scientific">Oryza sativa subsp. japonica</name>
    <name type="common">Rice</name>
    <dbReference type="NCBI Taxonomy" id="39947"/>
    <lineage>
        <taxon>Eukaryota</taxon>
        <taxon>Viridiplantae</taxon>
        <taxon>Streptophyta</taxon>
        <taxon>Embryophyta</taxon>
        <taxon>Tracheophyta</taxon>
        <taxon>Spermatophyta</taxon>
        <taxon>Magnoliopsida</taxon>
        <taxon>Liliopsida</taxon>
        <taxon>Poales</taxon>
        <taxon>Poaceae</taxon>
        <taxon>BOP clade</taxon>
        <taxon>Oryzoideae</taxon>
        <taxon>Oryzeae</taxon>
        <taxon>Oryzinae</taxon>
        <taxon>Oryza</taxon>
        <taxon>Oryza sativa</taxon>
    </lineage>
</organism>
<evidence type="ECO:0000255" key="1">
    <source>
        <dbReference type="PROSITE-ProRule" id="PRU00117"/>
    </source>
</evidence>
<evidence type="ECO:0000255" key="2">
    <source>
        <dbReference type="PROSITE-ProRule" id="PRU00723"/>
    </source>
</evidence>
<evidence type="ECO:0000256" key="3">
    <source>
        <dbReference type="SAM" id="MobiDB-lite"/>
    </source>
</evidence>
<evidence type="ECO:0000312" key="4">
    <source>
        <dbReference type="EMBL" id="EEE61859.1"/>
    </source>
</evidence>
<proteinExistence type="evidence at transcript level"/>
<keyword id="KW-0238">DNA-binding</keyword>
<keyword id="KW-0479">Metal-binding</keyword>
<keyword id="KW-1185">Reference proteome</keyword>
<keyword id="KW-0677">Repeat</keyword>
<keyword id="KW-0694">RNA-binding</keyword>
<keyword id="KW-0862">Zinc</keyword>
<keyword id="KW-0863">Zinc-finger</keyword>